<sequence length="254" mass="29605">MLILLSPAKTMTGTSKIKAPQGTTPRFQQEANEIALHMTQFPIDELSRILKLSPKLAAECYRRYQDFHAEDKQPLQAILAYTGVVFKNISPKDFTEEDFLFSQEHMRFVSGCYGLLRPLDLIKPYRMEFDVKIPELGDGNMYAFWKDRQTNTLIHDVRQGDRILLNLASLDIQPSFQWKEVERSVRIITPEFKIWKNGKAETIVIYAKMCRGQMSRYLIKNRISDPEALKAFTWEGFSYKESMSEGDNWVFLQE</sequence>
<organism>
    <name type="scientific">Parabacteroides distasonis (strain ATCC 8503 / DSM 20701 / CIP 104284 / JCM 5825 / NCTC 11152)</name>
    <dbReference type="NCBI Taxonomy" id="435591"/>
    <lineage>
        <taxon>Bacteria</taxon>
        <taxon>Pseudomonadati</taxon>
        <taxon>Bacteroidota</taxon>
        <taxon>Bacteroidia</taxon>
        <taxon>Bacteroidales</taxon>
        <taxon>Tannerellaceae</taxon>
        <taxon>Parabacteroides</taxon>
    </lineage>
</organism>
<keyword id="KW-1185">Reference proteome</keyword>
<feature type="chain" id="PRO_1000061618" description="UPF0246 protein BDI_1226">
    <location>
        <begin position="1"/>
        <end position="254"/>
    </location>
</feature>
<name>Y1226_PARD8</name>
<protein>
    <recommendedName>
        <fullName evidence="1">UPF0246 protein BDI_1226</fullName>
    </recommendedName>
</protein>
<evidence type="ECO:0000255" key="1">
    <source>
        <dbReference type="HAMAP-Rule" id="MF_00652"/>
    </source>
</evidence>
<reference key="1">
    <citation type="journal article" date="2007" name="PLoS Biol.">
        <title>Evolution of symbiotic bacteria in the distal human intestine.</title>
        <authorList>
            <person name="Xu J."/>
            <person name="Mahowald M.A."/>
            <person name="Ley R.E."/>
            <person name="Lozupone C.A."/>
            <person name="Hamady M."/>
            <person name="Martens E.C."/>
            <person name="Henrissat B."/>
            <person name="Coutinho P.M."/>
            <person name="Minx P."/>
            <person name="Latreille P."/>
            <person name="Cordum H."/>
            <person name="Van Brunt A."/>
            <person name="Kim K."/>
            <person name="Fulton R.S."/>
            <person name="Fulton L.A."/>
            <person name="Clifton S.W."/>
            <person name="Wilson R.K."/>
            <person name="Knight R.D."/>
            <person name="Gordon J.I."/>
        </authorList>
    </citation>
    <scope>NUCLEOTIDE SEQUENCE [LARGE SCALE GENOMIC DNA]</scope>
    <source>
        <strain>ATCC 8503 / DSM 20701 / CIP 104284 / JCM 5825 / NCTC 11152</strain>
    </source>
</reference>
<accession>A6LBC3</accession>
<gene>
    <name type="ordered locus">BDI_1226</name>
</gene>
<proteinExistence type="inferred from homology"/>
<dbReference type="EMBL" id="CP000140">
    <property type="protein sequence ID" value="ABR42987.1"/>
    <property type="molecule type" value="Genomic_DNA"/>
</dbReference>
<dbReference type="SMR" id="A6LBC3"/>
<dbReference type="STRING" id="435591.BDI_1226"/>
<dbReference type="PaxDb" id="435591-BDI_1226"/>
<dbReference type="KEGG" id="pdi:BDI_1226"/>
<dbReference type="eggNOG" id="COG3022">
    <property type="taxonomic scope" value="Bacteria"/>
</dbReference>
<dbReference type="HOGENOM" id="CLU_061989_0_1_10"/>
<dbReference type="BioCyc" id="PDIS435591:G1G5A-1261-MONOMER"/>
<dbReference type="Proteomes" id="UP000000566">
    <property type="component" value="Chromosome"/>
</dbReference>
<dbReference type="GO" id="GO:0005829">
    <property type="term" value="C:cytosol"/>
    <property type="evidence" value="ECO:0007669"/>
    <property type="project" value="TreeGrafter"/>
</dbReference>
<dbReference type="GO" id="GO:0033194">
    <property type="term" value="P:response to hydroperoxide"/>
    <property type="evidence" value="ECO:0007669"/>
    <property type="project" value="TreeGrafter"/>
</dbReference>
<dbReference type="HAMAP" id="MF_00652">
    <property type="entry name" value="UPF0246"/>
    <property type="match status" value="1"/>
</dbReference>
<dbReference type="InterPro" id="IPR005583">
    <property type="entry name" value="YaaA"/>
</dbReference>
<dbReference type="NCBIfam" id="NF002547">
    <property type="entry name" value="PRK02101.2-5"/>
    <property type="match status" value="1"/>
</dbReference>
<dbReference type="PANTHER" id="PTHR30283:SF4">
    <property type="entry name" value="PEROXIDE STRESS RESISTANCE PROTEIN YAAA"/>
    <property type="match status" value="1"/>
</dbReference>
<dbReference type="PANTHER" id="PTHR30283">
    <property type="entry name" value="PEROXIDE STRESS RESPONSE PROTEIN YAAA"/>
    <property type="match status" value="1"/>
</dbReference>
<dbReference type="Pfam" id="PF03883">
    <property type="entry name" value="H2O2_YaaD"/>
    <property type="match status" value="1"/>
</dbReference>
<comment type="similarity">
    <text evidence="1">Belongs to the UPF0246 family.</text>
</comment>